<dbReference type="PIR" id="A03104">
    <property type="entry name" value="VLTK1"/>
</dbReference>
<dbReference type="SMR" id="P02660"/>
<dbReference type="HOGENOM" id="CLU_176392_0_0_1"/>
<dbReference type="InParanoid" id="P02660"/>
<dbReference type="Proteomes" id="UP000001645">
    <property type="component" value="Unplaced"/>
</dbReference>
<dbReference type="GO" id="GO:0042627">
    <property type="term" value="C:chylomicron"/>
    <property type="evidence" value="ECO:0007669"/>
    <property type="project" value="InterPro"/>
</dbReference>
<dbReference type="GO" id="GO:0034361">
    <property type="term" value="C:very-low-density lipoprotein particle"/>
    <property type="evidence" value="ECO:0007669"/>
    <property type="project" value="UniProtKB-KW"/>
</dbReference>
<dbReference type="GO" id="GO:0004857">
    <property type="term" value="F:enzyme inhibitor activity"/>
    <property type="evidence" value="ECO:0007669"/>
    <property type="project" value="InterPro"/>
</dbReference>
<dbReference type="GO" id="GO:0045735">
    <property type="term" value="F:nutrient reservoir activity"/>
    <property type="evidence" value="ECO:0007669"/>
    <property type="project" value="UniProtKB-KW"/>
</dbReference>
<dbReference type="GO" id="GO:0006629">
    <property type="term" value="P:lipid metabolic process"/>
    <property type="evidence" value="ECO:0007669"/>
    <property type="project" value="InterPro"/>
</dbReference>
<dbReference type="InterPro" id="IPR008404">
    <property type="entry name" value="Apo-VLDL-II"/>
</dbReference>
<dbReference type="Pfam" id="PF05418">
    <property type="entry name" value="Apo-VLDL-II"/>
    <property type="match status" value="1"/>
</dbReference>
<dbReference type="PIRSF" id="PIRSF002369">
    <property type="entry name" value="Apo-VLDL-II"/>
    <property type="match status" value="1"/>
</dbReference>
<name>APOV1_MELGA</name>
<comment type="function">
    <text>Protein component of the very low density lipoprotein (VLDL) of egg-laying females. Potent lipoprotein lipase inhibitor, preventing the loss of triglycerides from VLDL on their way from the liver to the growing oocytes.</text>
</comment>
<comment type="subunit">
    <text evidence="1">Monomer.</text>
</comment>
<comment type="tissue specificity">
    <text>Found in egg yolk and in plasma.</text>
</comment>
<comment type="similarity">
    <text evidence="1">Belongs to the apovitellenin family.</text>
</comment>
<accession>P02660</accession>
<reference key="1">
    <citation type="journal article" date="1979" name="FEBS Lett.">
        <title>Sequenator determination of the amino acid sequence of apovitellenin I from turkey's egg yolk. Use of a stationary reaction cup during peptide bond cleavage.</title>
        <authorList>
            <person name="Inglis A.S."/>
            <person name="Strike P.M."/>
            <person name="Osborne W.C."/>
            <person name="Burley R.W."/>
        </authorList>
    </citation>
    <scope>PROTEIN SEQUENCE</scope>
</reference>
<feature type="chain" id="PRO_0000156867" description="Apovitellenin-1">
    <location>
        <begin position="1"/>
        <end position="82"/>
    </location>
</feature>
<evidence type="ECO:0000305" key="1"/>
<proteinExistence type="evidence at protein level"/>
<sequence>KSIFERDRRDWLVIPDAVAAYIYEAVNKMSPRAGQFLVDISQTTVVSGTRNFLIRETARLTILAEQLMEKIKNLWYTKVQGY</sequence>
<keyword id="KW-0903">Direct protein sequencing</keyword>
<keyword id="KW-1185">Reference proteome</keyword>
<keyword id="KW-0758">Storage protein</keyword>
<keyword id="KW-0850">VLDL</keyword>
<organism>
    <name type="scientific">Meleagris gallopavo</name>
    <name type="common">Wild turkey</name>
    <dbReference type="NCBI Taxonomy" id="9103"/>
    <lineage>
        <taxon>Eukaryota</taxon>
        <taxon>Metazoa</taxon>
        <taxon>Chordata</taxon>
        <taxon>Craniata</taxon>
        <taxon>Vertebrata</taxon>
        <taxon>Euteleostomi</taxon>
        <taxon>Archelosauria</taxon>
        <taxon>Archosauria</taxon>
        <taxon>Dinosauria</taxon>
        <taxon>Saurischia</taxon>
        <taxon>Theropoda</taxon>
        <taxon>Coelurosauria</taxon>
        <taxon>Aves</taxon>
        <taxon>Neognathae</taxon>
        <taxon>Galloanserae</taxon>
        <taxon>Galliformes</taxon>
        <taxon>Phasianidae</taxon>
        <taxon>Meleagridinae</taxon>
        <taxon>Meleagris</taxon>
    </lineage>
</organism>
<protein>
    <recommendedName>
        <fullName>Apovitellenin-1</fullName>
    </recommendedName>
    <alternativeName>
        <fullName>Apovitellenin I</fullName>
    </alternativeName>
</protein>